<protein>
    <recommendedName>
        <fullName evidence="1">Large ribosomal subunit protein uL14</fullName>
    </recommendedName>
    <alternativeName>
        <fullName evidence="2">50S ribosomal protein L14</fullName>
    </alternativeName>
</protein>
<organism>
    <name type="scientific">Flavobacterium psychrophilum (strain ATCC 49511 / DSM 21280 / CIP 103535 / JIP02/86)</name>
    <dbReference type="NCBI Taxonomy" id="402612"/>
    <lineage>
        <taxon>Bacteria</taxon>
        <taxon>Pseudomonadati</taxon>
        <taxon>Bacteroidota</taxon>
        <taxon>Flavobacteriia</taxon>
        <taxon>Flavobacteriales</taxon>
        <taxon>Flavobacteriaceae</taxon>
        <taxon>Flavobacterium</taxon>
    </lineage>
</organism>
<name>RL14_FLAPJ</name>
<proteinExistence type="inferred from homology"/>
<keyword id="KW-1185">Reference proteome</keyword>
<keyword id="KW-0687">Ribonucleoprotein</keyword>
<keyword id="KW-0689">Ribosomal protein</keyword>
<keyword id="KW-0694">RNA-binding</keyword>
<keyword id="KW-0699">rRNA-binding</keyword>
<reference key="1">
    <citation type="journal article" date="2007" name="Nat. Biotechnol.">
        <title>Complete genome sequence of the fish pathogen Flavobacterium psychrophilum.</title>
        <authorList>
            <person name="Duchaud E."/>
            <person name="Boussaha M."/>
            <person name="Loux V."/>
            <person name="Bernardet J.-F."/>
            <person name="Michel C."/>
            <person name="Kerouault B."/>
            <person name="Mondot S."/>
            <person name="Nicolas P."/>
            <person name="Bossy R."/>
            <person name="Caron C."/>
            <person name="Bessieres P."/>
            <person name="Gibrat J.-F."/>
            <person name="Claverol S."/>
            <person name="Dumetz F."/>
            <person name="Le Henaff M."/>
            <person name="Benmansour A."/>
        </authorList>
    </citation>
    <scope>NUCLEOTIDE SEQUENCE [LARGE SCALE GENOMIC DNA]</scope>
    <source>
        <strain>ATCC 49511 / DSM 21280 / CIP 103535 / JIP02/86</strain>
    </source>
</reference>
<sequence length="122" mass="13333">MVQQESRLRVADNTGAKEVLTIRVLGGTKRRYASVGDKIVVSIKDTAPNGSVKKGSVSTAVVVRTKKEVRRADGSYIRFDDNACVLLNAAGEMRGTRVFGPVARELREKQFMKIVSLAPEVL</sequence>
<accession>A6GZ89</accession>
<gene>
    <name evidence="1" type="primary">rplN</name>
    <name type="ordered locus">FP1329</name>
</gene>
<evidence type="ECO:0000255" key="1">
    <source>
        <dbReference type="HAMAP-Rule" id="MF_01367"/>
    </source>
</evidence>
<evidence type="ECO:0000305" key="2"/>
<feature type="chain" id="PRO_1000055580" description="Large ribosomal subunit protein uL14">
    <location>
        <begin position="1"/>
        <end position="122"/>
    </location>
</feature>
<comment type="function">
    <text evidence="1">Binds to 23S rRNA. Forms part of two intersubunit bridges in the 70S ribosome.</text>
</comment>
<comment type="subunit">
    <text evidence="1">Part of the 50S ribosomal subunit. Forms a cluster with proteins L3 and L19. In the 70S ribosome, L14 and L19 interact and together make contacts with the 16S rRNA in bridges B5 and B8.</text>
</comment>
<comment type="similarity">
    <text evidence="1">Belongs to the universal ribosomal protein uL14 family.</text>
</comment>
<dbReference type="EMBL" id="AM398681">
    <property type="protein sequence ID" value="CAL43412.1"/>
    <property type="molecule type" value="Genomic_DNA"/>
</dbReference>
<dbReference type="RefSeq" id="WP_011963460.1">
    <property type="nucleotide sequence ID" value="NC_009613.3"/>
</dbReference>
<dbReference type="RefSeq" id="YP_001296223.1">
    <property type="nucleotide sequence ID" value="NC_009613.3"/>
</dbReference>
<dbReference type="SMR" id="A6GZ89"/>
<dbReference type="STRING" id="402612.FP1329"/>
<dbReference type="EnsemblBacteria" id="CAL43412">
    <property type="protein sequence ID" value="CAL43412"/>
    <property type="gene ID" value="FP1329"/>
</dbReference>
<dbReference type="GeneID" id="66553232"/>
<dbReference type="KEGG" id="fps:FP1329"/>
<dbReference type="PATRIC" id="fig|402612.5.peg.1346"/>
<dbReference type="eggNOG" id="COG0093">
    <property type="taxonomic scope" value="Bacteria"/>
</dbReference>
<dbReference type="HOGENOM" id="CLU_095071_2_1_10"/>
<dbReference type="OrthoDB" id="9806379at2"/>
<dbReference type="Proteomes" id="UP000006394">
    <property type="component" value="Chromosome"/>
</dbReference>
<dbReference type="GO" id="GO:0022625">
    <property type="term" value="C:cytosolic large ribosomal subunit"/>
    <property type="evidence" value="ECO:0007669"/>
    <property type="project" value="TreeGrafter"/>
</dbReference>
<dbReference type="GO" id="GO:0070180">
    <property type="term" value="F:large ribosomal subunit rRNA binding"/>
    <property type="evidence" value="ECO:0007669"/>
    <property type="project" value="TreeGrafter"/>
</dbReference>
<dbReference type="GO" id="GO:0003735">
    <property type="term" value="F:structural constituent of ribosome"/>
    <property type="evidence" value="ECO:0007669"/>
    <property type="project" value="InterPro"/>
</dbReference>
<dbReference type="GO" id="GO:0006412">
    <property type="term" value="P:translation"/>
    <property type="evidence" value="ECO:0007669"/>
    <property type="project" value="UniProtKB-UniRule"/>
</dbReference>
<dbReference type="CDD" id="cd00337">
    <property type="entry name" value="Ribosomal_uL14"/>
    <property type="match status" value="1"/>
</dbReference>
<dbReference type="FunFam" id="2.40.150.20:FF:000001">
    <property type="entry name" value="50S ribosomal protein L14"/>
    <property type="match status" value="1"/>
</dbReference>
<dbReference type="Gene3D" id="2.40.150.20">
    <property type="entry name" value="Ribosomal protein L14"/>
    <property type="match status" value="1"/>
</dbReference>
<dbReference type="HAMAP" id="MF_01367">
    <property type="entry name" value="Ribosomal_uL14"/>
    <property type="match status" value="1"/>
</dbReference>
<dbReference type="InterPro" id="IPR000218">
    <property type="entry name" value="Ribosomal_uL14"/>
</dbReference>
<dbReference type="InterPro" id="IPR005745">
    <property type="entry name" value="Ribosomal_uL14_bac-type"/>
</dbReference>
<dbReference type="InterPro" id="IPR019972">
    <property type="entry name" value="Ribosomal_uL14_CS"/>
</dbReference>
<dbReference type="InterPro" id="IPR036853">
    <property type="entry name" value="Ribosomal_uL14_sf"/>
</dbReference>
<dbReference type="NCBIfam" id="TIGR01067">
    <property type="entry name" value="rplN_bact"/>
    <property type="match status" value="1"/>
</dbReference>
<dbReference type="PANTHER" id="PTHR11761">
    <property type="entry name" value="50S/60S RIBOSOMAL PROTEIN L14/L23"/>
    <property type="match status" value="1"/>
</dbReference>
<dbReference type="PANTHER" id="PTHR11761:SF3">
    <property type="entry name" value="LARGE RIBOSOMAL SUBUNIT PROTEIN UL14M"/>
    <property type="match status" value="1"/>
</dbReference>
<dbReference type="Pfam" id="PF00238">
    <property type="entry name" value="Ribosomal_L14"/>
    <property type="match status" value="1"/>
</dbReference>
<dbReference type="SMART" id="SM01374">
    <property type="entry name" value="Ribosomal_L14"/>
    <property type="match status" value="1"/>
</dbReference>
<dbReference type="SUPFAM" id="SSF50193">
    <property type="entry name" value="Ribosomal protein L14"/>
    <property type="match status" value="1"/>
</dbReference>
<dbReference type="PROSITE" id="PS00049">
    <property type="entry name" value="RIBOSOMAL_L14"/>
    <property type="match status" value="1"/>
</dbReference>